<dbReference type="EC" id="3.5.1.5" evidence="1"/>
<dbReference type="EMBL" id="CP000769">
    <property type="protein sequence ID" value="ABS28227.1"/>
    <property type="molecule type" value="Genomic_DNA"/>
</dbReference>
<dbReference type="RefSeq" id="WP_012098865.1">
    <property type="nucleotide sequence ID" value="NC_009675.1"/>
</dbReference>
<dbReference type="SMR" id="A7HHN1"/>
<dbReference type="STRING" id="404589.Anae109_4049"/>
<dbReference type="MEROPS" id="M38.982"/>
<dbReference type="KEGG" id="afw:Anae109_4049"/>
<dbReference type="eggNOG" id="COG0804">
    <property type="taxonomic scope" value="Bacteria"/>
</dbReference>
<dbReference type="HOGENOM" id="CLU_000980_0_0_7"/>
<dbReference type="OrthoDB" id="9802793at2"/>
<dbReference type="UniPathway" id="UPA00258">
    <property type="reaction ID" value="UER00370"/>
</dbReference>
<dbReference type="Proteomes" id="UP000006382">
    <property type="component" value="Chromosome"/>
</dbReference>
<dbReference type="GO" id="GO:0005737">
    <property type="term" value="C:cytoplasm"/>
    <property type="evidence" value="ECO:0007669"/>
    <property type="project" value="UniProtKB-SubCell"/>
</dbReference>
<dbReference type="GO" id="GO:0016151">
    <property type="term" value="F:nickel cation binding"/>
    <property type="evidence" value="ECO:0007669"/>
    <property type="project" value="UniProtKB-UniRule"/>
</dbReference>
<dbReference type="GO" id="GO:0009039">
    <property type="term" value="F:urease activity"/>
    <property type="evidence" value="ECO:0007669"/>
    <property type="project" value="UniProtKB-UniRule"/>
</dbReference>
<dbReference type="GO" id="GO:0043419">
    <property type="term" value="P:urea catabolic process"/>
    <property type="evidence" value="ECO:0007669"/>
    <property type="project" value="UniProtKB-UniRule"/>
</dbReference>
<dbReference type="CDD" id="cd00375">
    <property type="entry name" value="Urease_alpha"/>
    <property type="match status" value="1"/>
</dbReference>
<dbReference type="Gene3D" id="3.20.20.140">
    <property type="entry name" value="Metal-dependent hydrolases"/>
    <property type="match status" value="1"/>
</dbReference>
<dbReference type="Gene3D" id="2.30.40.10">
    <property type="entry name" value="Urease, subunit C, domain 1"/>
    <property type="match status" value="1"/>
</dbReference>
<dbReference type="HAMAP" id="MF_01953">
    <property type="entry name" value="Urease_alpha"/>
    <property type="match status" value="1"/>
</dbReference>
<dbReference type="InterPro" id="IPR006680">
    <property type="entry name" value="Amidohydro-rel"/>
</dbReference>
<dbReference type="InterPro" id="IPR011059">
    <property type="entry name" value="Metal-dep_hydrolase_composite"/>
</dbReference>
<dbReference type="InterPro" id="IPR032466">
    <property type="entry name" value="Metal_Hydrolase"/>
</dbReference>
<dbReference type="InterPro" id="IPR011612">
    <property type="entry name" value="Urease_alpha_N_dom"/>
</dbReference>
<dbReference type="InterPro" id="IPR050112">
    <property type="entry name" value="Urease_alpha_subunit"/>
</dbReference>
<dbReference type="InterPro" id="IPR017950">
    <property type="entry name" value="Urease_AS"/>
</dbReference>
<dbReference type="InterPro" id="IPR005848">
    <property type="entry name" value="Urease_asu"/>
</dbReference>
<dbReference type="InterPro" id="IPR017951">
    <property type="entry name" value="Urease_asu_c"/>
</dbReference>
<dbReference type="InterPro" id="IPR029754">
    <property type="entry name" value="Urease_Ni-bd"/>
</dbReference>
<dbReference type="NCBIfam" id="NF009685">
    <property type="entry name" value="PRK13206.1"/>
    <property type="match status" value="1"/>
</dbReference>
<dbReference type="NCBIfam" id="NF009686">
    <property type="entry name" value="PRK13207.1"/>
    <property type="match status" value="1"/>
</dbReference>
<dbReference type="NCBIfam" id="TIGR01792">
    <property type="entry name" value="urease_alph"/>
    <property type="match status" value="1"/>
</dbReference>
<dbReference type="PANTHER" id="PTHR43440">
    <property type="entry name" value="UREASE"/>
    <property type="match status" value="1"/>
</dbReference>
<dbReference type="PANTHER" id="PTHR43440:SF1">
    <property type="entry name" value="UREASE"/>
    <property type="match status" value="1"/>
</dbReference>
<dbReference type="Pfam" id="PF01979">
    <property type="entry name" value="Amidohydro_1"/>
    <property type="match status" value="1"/>
</dbReference>
<dbReference type="Pfam" id="PF00449">
    <property type="entry name" value="Urease_alpha"/>
    <property type="match status" value="1"/>
</dbReference>
<dbReference type="PRINTS" id="PR01752">
    <property type="entry name" value="UREASE"/>
</dbReference>
<dbReference type="SUPFAM" id="SSF51338">
    <property type="entry name" value="Composite domain of metallo-dependent hydrolases"/>
    <property type="match status" value="2"/>
</dbReference>
<dbReference type="SUPFAM" id="SSF51556">
    <property type="entry name" value="Metallo-dependent hydrolases"/>
    <property type="match status" value="1"/>
</dbReference>
<dbReference type="PROSITE" id="PS01120">
    <property type="entry name" value="UREASE_1"/>
    <property type="match status" value="1"/>
</dbReference>
<dbReference type="PROSITE" id="PS00145">
    <property type="entry name" value="UREASE_2"/>
    <property type="match status" value="1"/>
</dbReference>
<dbReference type="PROSITE" id="PS51368">
    <property type="entry name" value="UREASE_3"/>
    <property type="match status" value="1"/>
</dbReference>
<sequence>MTRRMDRRQYAQVYGPTTGDRVRLGDTALVLEVDRDLTVYGDECVFGGGKVLRDGMGQAAGAPPEEVLDLVITNALVLDQGGVTKADVGIRGGRIAALGKAGNPDAMAGVTPGMTIGPGTECIAGEGLILTAGGVDSHIHFISPQQAYEAIASGVTTMLGGGTGPATGTNATTCTPGARHVALLLQATDALPVNIGLLGKGNAASPEGLAEQVRAGAVGLKLHEDWGTTPAAIDTCLRVADQLDVQVAIHTDTLNESGCAEHSIAAFAGRTIHTFHTEGAGGGHAPDIIRVCGEPNVLPSSTNPTRPFTVNTVDEHLDMLVVCHHLDPSLPEDLAFAESRIRRETIAAEDVLHDLGAISMMSSDSQAMGRVGEVVTRTWQTADKMRRQRGRLPEERGDNDNLRIRRYLAKYTINPAVAHGLSHEVGSVEPGKLADLVLWRPALFGAKPELVLKGGLIAWAQMGDANASIPTPQPVVARPMFGALGRAVGATSVAFVSRASLEGGAVQGYGLAKRLVAVHGCRGLGKKDMRLNDALPRMEVDPETYEVRADGVLLRCEPAARLPLAQRYFLF</sequence>
<comment type="catalytic activity">
    <reaction evidence="1">
        <text>urea + 2 H2O + H(+) = hydrogencarbonate + 2 NH4(+)</text>
        <dbReference type="Rhea" id="RHEA:20557"/>
        <dbReference type="ChEBI" id="CHEBI:15377"/>
        <dbReference type="ChEBI" id="CHEBI:15378"/>
        <dbReference type="ChEBI" id="CHEBI:16199"/>
        <dbReference type="ChEBI" id="CHEBI:17544"/>
        <dbReference type="ChEBI" id="CHEBI:28938"/>
        <dbReference type="EC" id="3.5.1.5"/>
    </reaction>
</comment>
<comment type="cofactor">
    <cofactor evidence="1">
        <name>Ni cation</name>
        <dbReference type="ChEBI" id="CHEBI:25516"/>
    </cofactor>
    <text evidence="1">Binds 2 nickel ions per subunit.</text>
</comment>
<comment type="pathway">
    <text evidence="1">Nitrogen metabolism; urea degradation; CO(2) and NH(3) from urea (urease route): step 1/1.</text>
</comment>
<comment type="subunit">
    <text evidence="1">Heterotrimer of UreA (gamma), UreB (beta) and UreC (alpha) subunits. Three heterotrimers associate to form the active enzyme.</text>
</comment>
<comment type="subcellular location">
    <subcellularLocation>
        <location evidence="1">Cytoplasm</location>
    </subcellularLocation>
</comment>
<comment type="PTM">
    <text evidence="1">Carboxylation allows a single lysine to coordinate two nickel ions.</text>
</comment>
<comment type="similarity">
    <text evidence="1">Belongs to the metallo-dependent hydrolases superfamily. Urease alpha subunit family.</text>
</comment>
<gene>
    <name evidence="1" type="primary">ureC</name>
    <name type="ordered locus">Anae109_4049</name>
</gene>
<organism>
    <name type="scientific">Anaeromyxobacter sp. (strain Fw109-5)</name>
    <dbReference type="NCBI Taxonomy" id="404589"/>
    <lineage>
        <taxon>Bacteria</taxon>
        <taxon>Pseudomonadati</taxon>
        <taxon>Myxococcota</taxon>
        <taxon>Myxococcia</taxon>
        <taxon>Myxococcales</taxon>
        <taxon>Cystobacterineae</taxon>
        <taxon>Anaeromyxobacteraceae</taxon>
        <taxon>Anaeromyxobacter</taxon>
    </lineage>
</organism>
<reference key="1">
    <citation type="journal article" date="2015" name="Genome Announc.">
        <title>Complete genome sequence of Anaeromyxobacter sp. Fw109-5, an anaerobic, metal-reducing bacterium isolated from a contaminated subsurface environment.</title>
        <authorList>
            <person name="Hwang C."/>
            <person name="Copeland A."/>
            <person name="Lucas S."/>
            <person name="Lapidus A."/>
            <person name="Barry K."/>
            <person name="Glavina Del Rio T."/>
            <person name="Dalin E."/>
            <person name="Tice H."/>
            <person name="Pitluck S."/>
            <person name="Sims D."/>
            <person name="Brettin T."/>
            <person name="Bruce D.C."/>
            <person name="Detter J.C."/>
            <person name="Han C.S."/>
            <person name="Schmutz J."/>
            <person name="Larimer F.W."/>
            <person name="Land M.L."/>
            <person name="Hauser L.J."/>
            <person name="Kyrpides N."/>
            <person name="Lykidis A."/>
            <person name="Richardson P."/>
            <person name="Belieav A."/>
            <person name="Sanford R.A."/>
            <person name="Loeffler F.E."/>
            <person name="Fields M.W."/>
        </authorList>
    </citation>
    <scope>NUCLEOTIDE SEQUENCE [LARGE SCALE GENOMIC DNA]</scope>
    <source>
        <strain>Fw109-5</strain>
    </source>
</reference>
<feature type="chain" id="PRO_1000070644" description="Urease subunit alpha">
    <location>
        <begin position="1"/>
        <end position="571"/>
    </location>
</feature>
<feature type="domain" description="Urease" evidence="1">
    <location>
        <begin position="133"/>
        <end position="571"/>
    </location>
</feature>
<feature type="active site" description="Proton donor" evidence="1">
    <location>
        <position position="324"/>
    </location>
</feature>
<feature type="binding site" evidence="1">
    <location>
        <position position="138"/>
    </location>
    <ligand>
        <name>Ni(2+)</name>
        <dbReference type="ChEBI" id="CHEBI:49786"/>
        <label>1</label>
    </ligand>
</feature>
<feature type="binding site" evidence="1">
    <location>
        <position position="140"/>
    </location>
    <ligand>
        <name>Ni(2+)</name>
        <dbReference type="ChEBI" id="CHEBI:49786"/>
        <label>1</label>
    </ligand>
</feature>
<feature type="binding site" description="via carbamate group" evidence="1">
    <location>
        <position position="221"/>
    </location>
    <ligand>
        <name>Ni(2+)</name>
        <dbReference type="ChEBI" id="CHEBI:49786"/>
        <label>1</label>
    </ligand>
</feature>
<feature type="binding site" description="via carbamate group" evidence="1">
    <location>
        <position position="221"/>
    </location>
    <ligand>
        <name>Ni(2+)</name>
        <dbReference type="ChEBI" id="CHEBI:49786"/>
        <label>2</label>
    </ligand>
</feature>
<feature type="binding site" evidence="1">
    <location>
        <position position="223"/>
    </location>
    <ligand>
        <name>substrate</name>
    </ligand>
</feature>
<feature type="binding site" evidence="1">
    <location>
        <position position="250"/>
    </location>
    <ligand>
        <name>Ni(2+)</name>
        <dbReference type="ChEBI" id="CHEBI:49786"/>
        <label>2</label>
    </ligand>
</feature>
<feature type="binding site" evidence="1">
    <location>
        <position position="276"/>
    </location>
    <ligand>
        <name>Ni(2+)</name>
        <dbReference type="ChEBI" id="CHEBI:49786"/>
        <label>2</label>
    </ligand>
</feature>
<feature type="binding site" evidence="1">
    <location>
        <position position="364"/>
    </location>
    <ligand>
        <name>Ni(2+)</name>
        <dbReference type="ChEBI" id="CHEBI:49786"/>
        <label>1</label>
    </ligand>
</feature>
<feature type="modified residue" description="N6-carboxylysine" evidence="1">
    <location>
        <position position="221"/>
    </location>
</feature>
<keyword id="KW-0963">Cytoplasm</keyword>
<keyword id="KW-0378">Hydrolase</keyword>
<keyword id="KW-0479">Metal-binding</keyword>
<keyword id="KW-0533">Nickel</keyword>
<keyword id="KW-1185">Reference proteome</keyword>
<protein>
    <recommendedName>
        <fullName evidence="1">Urease subunit alpha</fullName>
        <ecNumber evidence="1">3.5.1.5</ecNumber>
    </recommendedName>
    <alternativeName>
        <fullName evidence="1">Urea amidohydrolase subunit alpha</fullName>
    </alternativeName>
</protein>
<accession>A7HHN1</accession>
<proteinExistence type="inferred from homology"/>
<evidence type="ECO:0000255" key="1">
    <source>
        <dbReference type="HAMAP-Rule" id="MF_01953"/>
    </source>
</evidence>
<name>URE1_ANADF</name>